<proteinExistence type="inferred from homology"/>
<keyword id="KW-0021">Allosteric enzyme</keyword>
<keyword id="KW-0963">Cytoplasm</keyword>
<keyword id="KW-0378">Hydrolase</keyword>
<keyword id="KW-0479">Metal-binding</keyword>
<keyword id="KW-0645">Protease</keyword>
<keyword id="KW-0915">Sodium</keyword>
<keyword id="KW-0346">Stress response</keyword>
<keyword id="KW-0888">Threonine protease</keyword>
<organism>
    <name type="scientific">Salmonella typhi</name>
    <dbReference type="NCBI Taxonomy" id="90370"/>
    <lineage>
        <taxon>Bacteria</taxon>
        <taxon>Pseudomonadati</taxon>
        <taxon>Pseudomonadota</taxon>
        <taxon>Gammaproteobacteria</taxon>
        <taxon>Enterobacterales</taxon>
        <taxon>Enterobacteriaceae</taxon>
        <taxon>Salmonella</taxon>
    </lineage>
</organism>
<protein>
    <recommendedName>
        <fullName evidence="2">ATP-dependent protease subunit HslV</fullName>
        <ecNumber evidence="2">3.4.25.2</ecNumber>
    </recommendedName>
    <alternativeName>
        <fullName evidence="2">Heat shock protein HslV</fullName>
    </alternativeName>
</protein>
<feature type="initiator methionine" description="Removed" evidence="1">
    <location>
        <position position="1"/>
    </location>
</feature>
<feature type="chain" id="PRO_0000148142" description="ATP-dependent protease subunit HslV">
    <location>
        <begin position="2"/>
        <end position="176"/>
    </location>
</feature>
<feature type="active site" evidence="2">
    <location>
        <position position="2"/>
    </location>
</feature>
<feature type="binding site" evidence="2">
    <location>
        <position position="157"/>
    </location>
    <ligand>
        <name>Na(+)</name>
        <dbReference type="ChEBI" id="CHEBI:29101"/>
    </ligand>
</feature>
<feature type="binding site" evidence="2">
    <location>
        <position position="160"/>
    </location>
    <ligand>
        <name>Na(+)</name>
        <dbReference type="ChEBI" id="CHEBI:29101"/>
    </ligand>
</feature>
<feature type="binding site" evidence="2">
    <location>
        <position position="163"/>
    </location>
    <ligand>
        <name>Na(+)</name>
        <dbReference type="ChEBI" id="CHEBI:29101"/>
    </ligand>
</feature>
<evidence type="ECO:0000250" key="1"/>
<evidence type="ECO:0000255" key="2">
    <source>
        <dbReference type="HAMAP-Rule" id="MF_00248"/>
    </source>
</evidence>
<gene>
    <name evidence="2" type="primary">hslV</name>
    <name type="ordered locus">STY3778</name>
    <name type="ordered locus">t3526</name>
</gene>
<dbReference type="EC" id="3.4.25.2" evidence="2"/>
<dbReference type="EMBL" id="AL513382">
    <property type="protein sequence ID" value="CAD09531.1"/>
    <property type="molecule type" value="Genomic_DNA"/>
</dbReference>
<dbReference type="EMBL" id="AE014613">
    <property type="protein sequence ID" value="AAO71033.1"/>
    <property type="molecule type" value="Genomic_DNA"/>
</dbReference>
<dbReference type="RefSeq" id="NP_457960.1">
    <property type="nucleotide sequence ID" value="NC_003198.1"/>
</dbReference>
<dbReference type="RefSeq" id="WP_000208240.1">
    <property type="nucleotide sequence ID" value="NZ_WSUR01000010.1"/>
</dbReference>
<dbReference type="SMR" id="P0A272"/>
<dbReference type="STRING" id="220341.gene:17587642"/>
<dbReference type="MEROPS" id="T01.006"/>
<dbReference type="KEGG" id="stt:t3526"/>
<dbReference type="KEGG" id="sty:STY3778"/>
<dbReference type="PATRIC" id="fig|220341.7.peg.3856"/>
<dbReference type="eggNOG" id="COG5405">
    <property type="taxonomic scope" value="Bacteria"/>
</dbReference>
<dbReference type="HOGENOM" id="CLU_093872_1_0_6"/>
<dbReference type="OMA" id="WRTDKML"/>
<dbReference type="OrthoDB" id="9804884at2"/>
<dbReference type="Proteomes" id="UP000000541">
    <property type="component" value="Chromosome"/>
</dbReference>
<dbReference type="Proteomes" id="UP000002670">
    <property type="component" value="Chromosome"/>
</dbReference>
<dbReference type="GO" id="GO:0009376">
    <property type="term" value="C:HslUV protease complex"/>
    <property type="evidence" value="ECO:0007669"/>
    <property type="project" value="UniProtKB-UniRule"/>
</dbReference>
<dbReference type="GO" id="GO:0005839">
    <property type="term" value="C:proteasome core complex"/>
    <property type="evidence" value="ECO:0007669"/>
    <property type="project" value="InterPro"/>
</dbReference>
<dbReference type="GO" id="GO:0046872">
    <property type="term" value="F:metal ion binding"/>
    <property type="evidence" value="ECO:0007669"/>
    <property type="project" value="UniProtKB-KW"/>
</dbReference>
<dbReference type="GO" id="GO:0004298">
    <property type="term" value="F:threonine-type endopeptidase activity"/>
    <property type="evidence" value="ECO:0007669"/>
    <property type="project" value="UniProtKB-KW"/>
</dbReference>
<dbReference type="GO" id="GO:0051603">
    <property type="term" value="P:proteolysis involved in protein catabolic process"/>
    <property type="evidence" value="ECO:0007669"/>
    <property type="project" value="InterPro"/>
</dbReference>
<dbReference type="CDD" id="cd01913">
    <property type="entry name" value="protease_HslV"/>
    <property type="match status" value="1"/>
</dbReference>
<dbReference type="FunFam" id="3.60.20.10:FF:000002">
    <property type="entry name" value="ATP-dependent protease subunit HslV"/>
    <property type="match status" value="1"/>
</dbReference>
<dbReference type="Gene3D" id="3.60.20.10">
    <property type="entry name" value="Glutamine Phosphoribosylpyrophosphate, subunit 1, domain 1"/>
    <property type="match status" value="1"/>
</dbReference>
<dbReference type="HAMAP" id="MF_00248">
    <property type="entry name" value="HslV"/>
    <property type="match status" value="1"/>
</dbReference>
<dbReference type="InterPro" id="IPR022281">
    <property type="entry name" value="ATP-dep_Prtase_HsIV_su"/>
</dbReference>
<dbReference type="InterPro" id="IPR029055">
    <property type="entry name" value="Ntn_hydrolases_N"/>
</dbReference>
<dbReference type="InterPro" id="IPR001353">
    <property type="entry name" value="Proteasome_sua/b"/>
</dbReference>
<dbReference type="InterPro" id="IPR023333">
    <property type="entry name" value="Proteasome_suB-type"/>
</dbReference>
<dbReference type="NCBIfam" id="TIGR03692">
    <property type="entry name" value="ATP_dep_HslV"/>
    <property type="match status" value="1"/>
</dbReference>
<dbReference type="NCBIfam" id="NF003964">
    <property type="entry name" value="PRK05456.1"/>
    <property type="match status" value="1"/>
</dbReference>
<dbReference type="PANTHER" id="PTHR32194:SF0">
    <property type="entry name" value="ATP-DEPENDENT PROTEASE SUBUNIT HSLV"/>
    <property type="match status" value="1"/>
</dbReference>
<dbReference type="PANTHER" id="PTHR32194">
    <property type="entry name" value="METALLOPROTEASE TLDD"/>
    <property type="match status" value="1"/>
</dbReference>
<dbReference type="Pfam" id="PF00227">
    <property type="entry name" value="Proteasome"/>
    <property type="match status" value="1"/>
</dbReference>
<dbReference type="PIRSF" id="PIRSF039093">
    <property type="entry name" value="HslV"/>
    <property type="match status" value="1"/>
</dbReference>
<dbReference type="SUPFAM" id="SSF56235">
    <property type="entry name" value="N-terminal nucleophile aminohydrolases (Ntn hydrolases)"/>
    <property type="match status" value="1"/>
</dbReference>
<dbReference type="PROSITE" id="PS51476">
    <property type="entry name" value="PROTEASOME_BETA_2"/>
    <property type="match status" value="1"/>
</dbReference>
<reference key="1">
    <citation type="journal article" date="2001" name="Nature">
        <title>Complete genome sequence of a multiple drug resistant Salmonella enterica serovar Typhi CT18.</title>
        <authorList>
            <person name="Parkhill J."/>
            <person name="Dougan G."/>
            <person name="James K.D."/>
            <person name="Thomson N.R."/>
            <person name="Pickard D."/>
            <person name="Wain J."/>
            <person name="Churcher C.M."/>
            <person name="Mungall K.L."/>
            <person name="Bentley S.D."/>
            <person name="Holden M.T.G."/>
            <person name="Sebaihia M."/>
            <person name="Baker S."/>
            <person name="Basham D."/>
            <person name="Brooks K."/>
            <person name="Chillingworth T."/>
            <person name="Connerton P."/>
            <person name="Cronin A."/>
            <person name="Davis P."/>
            <person name="Davies R.M."/>
            <person name="Dowd L."/>
            <person name="White N."/>
            <person name="Farrar J."/>
            <person name="Feltwell T."/>
            <person name="Hamlin N."/>
            <person name="Haque A."/>
            <person name="Hien T.T."/>
            <person name="Holroyd S."/>
            <person name="Jagels K."/>
            <person name="Krogh A."/>
            <person name="Larsen T.S."/>
            <person name="Leather S."/>
            <person name="Moule S."/>
            <person name="O'Gaora P."/>
            <person name="Parry C."/>
            <person name="Quail M.A."/>
            <person name="Rutherford K.M."/>
            <person name="Simmonds M."/>
            <person name="Skelton J."/>
            <person name="Stevens K."/>
            <person name="Whitehead S."/>
            <person name="Barrell B.G."/>
        </authorList>
    </citation>
    <scope>NUCLEOTIDE SEQUENCE [LARGE SCALE GENOMIC DNA]</scope>
    <source>
        <strain>CT18</strain>
    </source>
</reference>
<reference key="2">
    <citation type="journal article" date="2003" name="J. Bacteriol.">
        <title>Comparative genomics of Salmonella enterica serovar Typhi strains Ty2 and CT18.</title>
        <authorList>
            <person name="Deng W."/>
            <person name="Liou S.-R."/>
            <person name="Plunkett G. III"/>
            <person name="Mayhew G.F."/>
            <person name="Rose D.J."/>
            <person name="Burland V."/>
            <person name="Kodoyianni V."/>
            <person name="Schwartz D.C."/>
            <person name="Blattner F.R."/>
        </authorList>
    </citation>
    <scope>NUCLEOTIDE SEQUENCE [LARGE SCALE GENOMIC DNA]</scope>
    <source>
        <strain>ATCC 700931 / Ty2</strain>
    </source>
</reference>
<name>HSLV_SALTI</name>
<sequence length="176" mass="18985">MTTIVSVRRNGHVVIAGDGQATLGNTVMKGNVKKVRRLYNDKVIAGFAGGTADAFTLFELFERKLEMHQGHLVKAAVELAKDWRTDRMLRKLEALLAVADETASLIITGNGDVVQPENDLIAIGSGGPYAQAAARALLENTELGAREIAEKALDIAGDICIYTNHFHTIEELTAKA</sequence>
<comment type="function">
    <text evidence="2">Protease subunit of a proteasome-like degradation complex believed to be a general protein degrading machinery.</text>
</comment>
<comment type="catalytic activity">
    <reaction evidence="2">
        <text>ATP-dependent cleavage of peptide bonds with broad specificity.</text>
        <dbReference type="EC" id="3.4.25.2"/>
    </reaction>
</comment>
<comment type="activity regulation">
    <text evidence="2">Allosterically activated by HslU binding.</text>
</comment>
<comment type="subunit">
    <text evidence="2">A double ring-shaped homohexamer of HslV is capped on each side by a ring-shaped HslU homohexamer. The assembly of the HslU/HslV complex is dependent on binding of ATP.</text>
</comment>
<comment type="subcellular location">
    <subcellularLocation>
        <location evidence="2">Cytoplasm</location>
    </subcellularLocation>
</comment>
<comment type="induction">
    <text evidence="2">By heat shock.</text>
</comment>
<comment type="similarity">
    <text evidence="2">Belongs to the peptidase T1B family. HslV subfamily.</text>
</comment>
<accession>P0A272</accession>
<accession>Q9K4Q6</accession>